<reference key="1">
    <citation type="journal article" date="2001" name="Proc. Natl. Acad. Sci. U.S.A.">
        <title>Genome sequence of an industrial microorganism Streptomyces avermitilis: deducing the ability of producing secondary metabolites.</title>
        <authorList>
            <person name="Omura S."/>
            <person name="Ikeda H."/>
            <person name="Ishikawa J."/>
            <person name="Hanamoto A."/>
            <person name="Takahashi C."/>
            <person name="Shinose M."/>
            <person name="Takahashi Y."/>
            <person name="Horikawa H."/>
            <person name="Nakazawa H."/>
            <person name="Osonoe T."/>
            <person name="Kikuchi H."/>
            <person name="Shiba T."/>
            <person name="Sakaki Y."/>
            <person name="Hattori M."/>
        </authorList>
    </citation>
    <scope>NUCLEOTIDE SEQUENCE [LARGE SCALE GENOMIC DNA]</scope>
    <source>
        <strain>ATCC 31267 / DSM 46492 / JCM 5070 / NBRC 14893 / NCIMB 12804 / NRRL 8165 / MA-4680</strain>
    </source>
</reference>
<reference key="2">
    <citation type="journal article" date="2003" name="Nat. Biotechnol.">
        <title>Complete genome sequence and comparative analysis of the industrial microorganism Streptomyces avermitilis.</title>
        <authorList>
            <person name="Ikeda H."/>
            <person name="Ishikawa J."/>
            <person name="Hanamoto A."/>
            <person name="Shinose M."/>
            <person name="Kikuchi H."/>
            <person name="Shiba T."/>
            <person name="Sakaki Y."/>
            <person name="Hattori M."/>
            <person name="Omura S."/>
        </authorList>
    </citation>
    <scope>NUCLEOTIDE SEQUENCE [LARGE SCALE GENOMIC DNA]</scope>
    <source>
        <strain>ATCC 31267 / DSM 46492 / JCM 5070 / NBRC 14893 / NCIMB 12804 / NRRL 8165 / MA-4680</strain>
    </source>
</reference>
<dbReference type="EMBL" id="BA000030">
    <property type="protein sequence ID" value="BAC68629.1"/>
    <property type="molecule type" value="Genomic_DNA"/>
</dbReference>
<dbReference type="RefSeq" id="WP_010982357.1">
    <property type="nucleotide sequence ID" value="NZ_JZJK01000088.1"/>
</dbReference>
<dbReference type="SMR" id="Q82PI3"/>
<dbReference type="GeneID" id="41538031"/>
<dbReference type="KEGG" id="sma:SAVERM_919"/>
<dbReference type="eggNOG" id="COG2060">
    <property type="taxonomic scope" value="Bacteria"/>
</dbReference>
<dbReference type="HOGENOM" id="CLU_018614_3_0_11"/>
<dbReference type="OrthoDB" id="9763796at2"/>
<dbReference type="Proteomes" id="UP000000428">
    <property type="component" value="Chromosome"/>
</dbReference>
<dbReference type="GO" id="GO:0005886">
    <property type="term" value="C:plasma membrane"/>
    <property type="evidence" value="ECO:0007669"/>
    <property type="project" value="UniProtKB-SubCell"/>
</dbReference>
<dbReference type="GO" id="GO:0008556">
    <property type="term" value="F:P-type potassium transmembrane transporter activity"/>
    <property type="evidence" value="ECO:0007669"/>
    <property type="project" value="InterPro"/>
</dbReference>
<dbReference type="GO" id="GO:0030955">
    <property type="term" value="F:potassium ion binding"/>
    <property type="evidence" value="ECO:0007669"/>
    <property type="project" value="UniProtKB-UniRule"/>
</dbReference>
<dbReference type="HAMAP" id="MF_00275">
    <property type="entry name" value="KdpA"/>
    <property type="match status" value="1"/>
</dbReference>
<dbReference type="InterPro" id="IPR004623">
    <property type="entry name" value="KdpA"/>
</dbReference>
<dbReference type="NCBIfam" id="TIGR00680">
    <property type="entry name" value="kdpA"/>
    <property type="match status" value="1"/>
</dbReference>
<dbReference type="PANTHER" id="PTHR30607">
    <property type="entry name" value="POTASSIUM-TRANSPORTING ATPASE A CHAIN"/>
    <property type="match status" value="1"/>
</dbReference>
<dbReference type="PANTHER" id="PTHR30607:SF2">
    <property type="entry name" value="POTASSIUM-TRANSPORTING ATPASE POTASSIUM-BINDING SUBUNIT"/>
    <property type="match status" value="1"/>
</dbReference>
<dbReference type="Pfam" id="PF03814">
    <property type="entry name" value="KdpA"/>
    <property type="match status" value="1"/>
</dbReference>
<dbReference type="PIRSF" id="PIRSF001294">
    <property type="entry name" value="K_ATPaseA"/>
    <property type="match status" value="1"/>
</dbReference>
<evidence type="ECO:0000255" key="1">
    <source>
        <dbReference type="HAMAP-Rule" id="MF_00275"/>
    </source>
</evidence>
<comment type="function">
    <text evidence="1">Part of the high-affinity ATP-driven potassium transport (or Kdp) system, which catalyzes the hydrolysis of ATP coupled with the electrogenic transport of potassium into the cytoplasm. This subunit binds the extracellular potassium ions and delivers the ions to the membrane domain of KdpB through an intramembrane tunnel.</text>
</comment>
<comment type="subunit">
    <text evidence="1">The system is composed of three essential subunits: KdpA, KdpB and KdpC.</text>
</comment>
<comment type="subcellular location">
    <subcellularLocation>
        <location evidence="1">Cell membrane</location>
        <topology evidence="1">Multi-pass membrane protein</topology>
    </subcellularLocation>
</comment>
<comment type="similarity">
    <text evidence="1">Belongs to the KdpA family.</text>
</comment>
<keyword id="KW-1003">Cell membrane</keyword>
<keyword id="KW-0406">Ion transport</keyword>
<keyword id="KW-0472">Membrane</keyword>
<keyword id="KW-0630">Potassium</keyword>
<keyword id="KW-0633">Potassium transport</keyword>
<keyword id="KW-1185">Reference proteome</keyword>
<keyword id="KW-0812">Transmembrane</keyword>
<keyword id="KW-1133">Transmembrane helix</keyword>
<keyword id="KW-0813">Transport</keyword>
<name>KDPA_STRAW</name>
<feature type="chain" id="PRO_0000166535" description="Potassium-transporting ATPase potassium-binding subunit">
    <location>
        <begin position="1"/>
        <end position="554"/>
    </location>
</feature>
<feature type="transmembrane region" description="Helical" evidence="1">
    <location>
        <begin position="1"/>
        <end position="21"/>
    </location>
</feature>
<feature type="transmembrane region" description="Helical" evidence="1">
    <location>
        <begin position="60"/>
        <end position="80"/>
    </location>
</feature>
<feature type="transmembrane region" description="Helical" evidence="1">
    <location>
        <begin position="131"/>
        <end position="151"/>
    </location>
</feature>
<feature type="transmembrane region" description="Helical" evidence="1">
    <location>
        <begin position="174"/>
        <end position="194"/>
    </location>
</feature>
<feature type="transmembrane region" description="Helical" evidence="1">
    <location>
        <begin position="246"/>
        <end position="266"/>
    </location>
</feature>
<feature type="transmembrane region" description="Helical" evidence="1">
    <location>
        <begin position="279"/>
        <end position="299"/>
    </location>
</feature>
<feature type="transmembrane region" description="Helical" evidence="1">
    <location>
        <begin position="375"/>
        <end position="395"/>
    </location>
</feature>
<feature type="transmembrane region" description="Helical" evidence="1">
    <location>
        <begin position="412"/>
        <end position="432"/>
    </location>
</feature>
<feature type="transmembrane region" description="Helical" evidence="1">
    <location>
        <begin position="481"/>
        <end position="501"/>
    </location>
</feature>
<feature type="transmembrane region" description="Helical" evidence="1">
    <location>
        <begin position="525"/>
        <end position="545"/>
    </location>
</feature>
<accession>Q82PI3</accession>
<protein>
    <recommendedName>
        <fullName evidence="1">Potassium-transporting ATPase potassium-binding subunit</fullName>
    </recommendedName>
    <alternativeName>
        <fullName evidence="1">ATP phosphohydrolase [potassium-transporting] A chain</fullName>
    </alternativeName>
    <alternativeName>
        <fullName evidence="1">Potassium-binding and translocating subunit A</fullName>
    </alternativeName>
    <alternativeName>
        <fullName evidence="1">Potassium-translocating ATPase A chain</fullName>
    </alternativeName>
</protein>
<proteinExistence type="inferred from homology"/>
<gene>
    <name evidence="1" type="primary">kdpA</name>
    <name type="ordered locus">SAV_919</name>
</gene>
<organism>
    <name type="scientific">Streptomyces avermitilis (strain ATCC 31267 / DSM 46492 / JCM 5070 / NBRC 14893 / NCIMB 12804 / NRRL 8165 / MA-4680)</name>
    <dbReference type="NCBI Taxonomy" id="227882"/>
    <lineage>
        <taxon>Bacteria</taxon>
        <taxon>Bacillati</taxon>
        <taxon>Actinomycetota</taxon>
        <taxon>Actinomycetes</taxon>
        <taxon>Kitasatosporales</taxon>
        <taxon>Streptomycetaceae</taxon>
        <taxon>Streptomyces</taxon>
    </lineage>
</organism>
<sequence length="554" mass="58114">MSPVLAGVLQLVALIAALALAYRPLGDYMAKVYSSDKHLRVEKWIYKGIGADPDTQMRWPAYLRGVLAFSAVSVLFLYVLQRVQGSLPGSLGFRSIDPDQAFNTAASFVTNTNWQSYYGEQAMGHVVQTGGLAVQNFVSASVGIAVAVALVRGFSRSRTGELGNFWSDLVRGTVRVLLPVSVIAAIVLVACGAIQNFSGIHSVGQFMGGSQQWNGGAVASQEAIKEAGTNGGGYFNANSAHPFENPGPFSNLFEIFLILLIPFALTRTFGRMVGSLRQGYAILATMVTIWIGFTALMMWTEFAHHGPAFQIAGGAMEGKETRFGVGGSSIFAVATTLTSTGAVDSFHSSFTGLGGGITLLSMQLGEIAPGGTGSGLYGILIMAVIAVFIAGLMVGRTPEYLGKKIGTREIKFAACYILITPALALVFTAAAMALPTPGHSMTNSGAHGFSEILYAYTSGANNNGSAFAGLNADTQWFNTTIGIVMLLGRFVPMVFVLALAGSLAEQKPIPATVGTLRTEKPLFTGLLVGAILIITGLTYFPALALGPLAEGLAS</sequence>